<proteinExistence type="inferred from homology"/>
<keyword id="KW-0998">Cell outer membrane</keyword>
<keyword id="KW-0472">Membrane</keyword>
<keyword id="KW-0732">Signal</keyword>
<feature type="signal peptide" evidence="1">
    <location>
        <begin position="1"/>
        <end position="31"/>
    </location>
</feature>
<feature type="chain" id="PRO_5000209343" description="LPS-assembly protein LptD">
    <location>
        <begin position="32"/>
        <end position="794"/>
    </location>
</feature>
<sequence length="794" mass="88761">MPSHCSSLLCARFRLSSLAVIVALAASGVRAEGAGSSPSAAEIDWRPRSELPPEVAGRLPVFCEGGYLPGTVGGDGAVVPGEGIEGSMPLEASALNARYELDSELYLQGDVRLRQGPFQATGAEARYNQQSGELQLQGPLVSRGEGFLLTGQDANYSTQSGQLDINTATFLLHESELRGEASSLSRVSESQVVISDGMITTCGPGQNDWSIVASDIELDQAEGFGTARHVRLEVLDAPVFYWPYITFPIDDRRKTGFLYPQFGSSSAGSGAYLALPYYLNLAPHYDATLTPQYIHGRGLFTEVEGRYLSQYGESVLQLGYIDNDSAFRDENPGENGERWALDFTTRAAFGGGWSGYGDYSVISDEDYLSDLNRSLEIDQATHLQRRGGVRYYGANQYFETYLNGYQTIPDRIADVDKPYAQLPEVIYGGSLEAGWLEASLESQYTWFYRDNENLTGLDKANGQRLRAIPELALPMRALWGFSRPSVSLDYTRYELDDYTLGDAGFDRTVPVFEWDNGLYFDRRSSLFDVPYNQTLEPRLYYAWADAESDQNYIPDFDTGIRSFRFDQLFRRDRFTGGDRVGDANQLTVALTSRFNDLLTGAERARVSVGQVRYFEDREVDLFGEGASDRSRSPLAGELVLNPIDNLELRSSLLWDHETRKTEEGRSQLIFHSEDYRYLATLGHTYSRPDELEQTDIGTVFPVTDQVSAIGRWVWDSELDRTVGTLAGLEYNNCCWSFQVVHQNYLTDDEELDTRLLFRIELKGLGGSGGASDNIADAIYGYDERERRRFGNPRR</sequence>
<gene>
    <name evidence="1" type="primary">lptD</name>
    <name type="synonym">imp</name>
    <name type="synonym">ostA</name>
    <name type="ordered locus">Maqu_3510</name>
</gene>
<dbReference type="EMBL" id="CP000514">
    <property type="protein sequence ID" value="ABM20580.1"/>
    <property type="molecule type" value="Genomic_DNA"/>
</dbReference>
<dbReference type="SMR" id="A1U6G1"/>
<dbReference type="STRING" id="351348.Maqu_3510"/>
<dbReference type="KEGG" id="maq:Maqu_3510"/>
<dbReference type="eggNOG" id="COG1452">
    <property type="taxonomic scope" value="Bacteria"/>
</dbReference>
<dbReference type="HOGENOM" id="CLU_009039_0_0_6"/>
<dbReference type="OrthoDB" id="9760225at2"/>
<dbReference type="Proteomes" id="UP000000998">
    <property type="component" value="Chromosome"/>
</dbReference>
<dbReference type="GO" id="GO:0009279">
    <property type="term" value="C:cell outer membrane"/>
    <property type="evidence" value="ECO:0007669"/>
    <property type="project" value="UniProtKB-SubCell"/>
</dbReference>
<dbReference type="GO" id="GO:1990351">
    <property type="term" value="C:transporter complex"/>
    <property type="evidence" value="ECO:0007669"/>
    <property type="project" value="TreeGrafter"/>
</dbReference>
<dbReference type="GO" id="GO:0043165">
    <property type="term" value="P:Gram-negative-bacterium-type cell outer membrane assembly"/>
    <property type="evidence" value="ECO:0007669"/>
    <property type="project" value="UniProtKB-UniRule"/>
</dbReference>
<dbReference type="GO" id="GO:0015920">
    <property type="term" value="P:lipopolysaccharide transport"/>
    <property type="evidence" value="ECO:0007669"/>
    <property type="project" value="InterPro"/>
</dbReference>
<dbReference type="HAMAP" id="MF_01411">
    <property type="entry name" value="LPS_assembly_LptD"/>
    <property type="match status" value="1"/>
</dbReference>
<dbReference type="InterPro" id="IPR020889">
    <property type="entry name" value="LipoPS_assembly_LptD"/>
</dbReference>
<dbReference type="InterPro" id="IPR050218">
    <property type="entry name" value="LptD"/>
</dbReference>
<dbReference type="InterPro" id="IPR045659">
    <property type="entry name" value="LptD_2"/>
</dbReference>
<dbReference type="InterPro" id="IPR007543">
    <property type="entry name" value="LptD_C"/>
</dbReference>
<dbReference type="PANTHER" id="PTHR30189">
    <property type="entry name" value="LPS-ASSEMBLY PROTEIN"/>
    <property type="match status" value="1"/>
</dbReference>
<dbReference type="PANTHER" id="PTHR30189:SF1">
    <property type="entry name" value="LPS-ASSEMBLY PROTEIN LPTD"/>
    <property type="match status" value="1"/>
</dbReference>
<dbReference type="Pfam" id="PF04453">
    <property type="entry name" value="LptD"/>
    <property type="match status" value="1"/>
</dbReference>
<dbReference type="Pfam" id="PF19838">
    <property type="entry name" value="LptD_2"/>
    <property type="match status" value="1"/>
</dbReference>
<organism>
    <name type="scientific">Marinobacter nauticus (strain ATCC 700491 / DSM 11845 / VT8)</name>
    <name type="common">Marinobacter aquaeolei</name>
    <dbReference type="NCBI Taxonomy" id="351348"/>
    <lineage>
        <taxon>Bacteria</taxon>
        <taxon>Pseudomonadati</taxon>
        <taxon>Pseudomonadota</taxon>
        <taxon>Gammaproteobacteria</taxon>
        <taxon>Pseudomonadales</taxon>
        <taxon>Marinobacteraceae</taxon>
        <taxon>Marinobacter</taxon>
    </lineage>
</organism>
<comment type="function">
    <text evidence="1">Together with LptE, is involved in the assembly of lipopolysaccharide (LPS) at the surface of the outer membrane.</text>
</comment>
<comment type="subunit">
    <text evidence="1">Component of the lipopolysaccharide transport and assembly complex. Interacts with LptE and LptA.</text>
</comment>
<comment type="subcellular location">
    <subcellularLocation>
        <location evidence="1">Cell outer membrane</location>
    </subcellularLocation>
</comment>
<comment type="similarity">
    <text evidence="1">Belongs to the LptD family.</text>
</comment>
<protein>
    <recommendedName>
        <fullName evidence="1">LPS-assembly protein LptD</fullName>
    </recommendedName>
</protein>
<name>LPTD_MARN8</name>
<reference key="1">
    <citation type="journal article" date="2011" name="Appl. Environ. Microbiol.">
        <title>Genomic potential of Marinobacter aquaeolei, a biogeochemical 'opportunitroph'.</title>
        <authorList>
            <person name="Singer E."/>
            <person name="Webb E.A."/>
            <person name="Nelson W.C."/>
            <person name="Heidelberg J.F."/>
            <person name="Ivanova N."/>
            <person name="Pati A."/>
            <person name="Edwards K.J."/>
        </authorList>
    </citation>
    <scope>NUCLEOTIDE SEQUENCE [LARGE SCALE GENOMIC DNA]</scope>
    <source>
        <strain>ATCC 700491 / DSM 11845 / VT8</strain>
    </source>
</reference>
<evidence type="ECO:0000255" key="1">
    <source>
        <dbReference type="HAMAP-Rule" id="MF_01411"/>
    </source>
</evidence>
<accession>A1U6G1</accession>